<organism>
    <name type="scientific">Escherichia coli (strain ATCC 8739 / DSM 1576 / NBRC 3972 / NCIMB 8545 / WDCM 00012 / Crooks)</name>
    <dbReference type="NCBI Taxonomy" id="481805"/>
    <lineage>
        <taxon>Bacteria</taxon>
        <taxon>Pseudomonadati</taxon>
        <taxon>Pseudomonadota</taxon>
        <taxon>Gammaproteobacteria</taxon>
        <taxon>Enterobacterales</taxon>
        <taxon>Enterobacteriaceae</taxon>
        <taxon>Escherichia</taxon>
    </lineage>
</organism>
<accession>B1IVB6</accession>
<gene>
    <name evidence="1" type="primary">sthA</name>
    <name evidence="1" type="synonym">udhA</name>
    <name type="ordered locus">EcolC_4054</name>
</gene>
<evidence type="ECO:0000255" key="1">
    <source>
        <dbReference type="HAMAP-Rule" id="MF_00247"/>
    </source>
</evidence>
<feature type="chain" id="PRO_1000078410" description="Soluble pyridine nucleotide transhydrogenase">
    <location>
        <begin position="1"/>
        <end position="466"/>
    </location>
</feature>
<feature type="binding site" evidence="1">
    <location>
        <begin position="36"/>
        <end position="45"/>
    </location>
    <ligand>
        <name>FAD</name>
        <dbReference type="ChEBI" id="CHEBI:57692"/>
    </ligand>
</feature>
<comment type="function">
    <text evidence="1">Conversion of NADPH, generated by peripheral catabolic pathways, to NADH, which can enter the respiratory chain for energy generation.</text>
</comment>
<comment type="catalytic activity">
    <reaction evidence="1">
        <text>NAD(+) + NADPH = NADH + NADP(+)</text>
        <dbReference type="Rhea" id="RHEA:11692"/>
        <dbReference type="ChEBI" id="CHEBI:57540"/>
        <dbReference type="ChEBI" id="CHEBI:57783"/>
        <dbReference type="ChEBI" id="CHEBI:57945"/>
        <dbReference type="ChEBI" id="CHEBI:58349"/>
        <dbReference type="EC" id="1.6.1.1"/>
    </reaction>
</comment>
<comment type="cofactor">
    <cofactor evidence="1">
        <name>FAD</name>
        <dbReference type="ChEBI" id="CHEBI:57692"/>
    </cofactor>
    <text evidence="1">Binds 1 FAD per subunit.</text>
</comment>
<comment type="subcellular location">
    <subcellularLocation>
        <location evidence="1">Cytoplasm</location>
    </subcellularLocation>
</comment>
<comment type="similarity">
    <text evidence="1">Belongs to the class-I pyridine nucleotide-disulfide oxidoreductase family.</text>
</comment>
<reference key="1">
    <citation type="submission" date="2008-02" db="EMBL/GenBank/DDBJ databases">
        <title>Complete sequence of Escherichia coli C str. ATCC 8739.</title>
        <authorList>
            <person name="Copeland A."/>
            <person name="Lucas S."/>
            <person name="Lapidus A."/>
            <person name="Glavina del Rio T."/>
            <person name="Dalin E."/>
            <person name="Tice H."/>
            <person name="Bruce D."/>
            <person name="Goodwin L."/>
            <person name="Pitluck S."/>
            <person name="Kiss H."/>
            <person name="Brettin T."/>
            <person name="Detter J.C."/>
            <person name="Han C."/>
            <person name="Kuske C.R."/>
            <person name="Schmutz J."/>
            <person name="Larimer F."/>
            <person name="Land M."/>
            <person name="Hauser L."/>
            <person name="Kyrpides N."/>
            <person name="Mikhailova N."/>
            <person name="Ingram L."/>
            <person name="Richardson P."/>
        </authorList>
    </citation>
    <scope>NUCLEOTIDE SEQUENCE [LARGE SCALE GENOMIC DNA]</scope>
    <source>
        <strain>ATCC 8739 / DSM 1576 / NBRC 3972 / NCIMB 8545 / WDCM 00012 / Crooks</strain>
    </source>
</reference>
<name>STHA_ECOLC</name>
<proteinExistence type="inferred from homology"/>
<dbReference type="EC" id="1.6.1.1" evidence="1"/>
<dbReference type="EMBL" id="CP000946">
    <property type="protein sequence ID" value="ACA79653.1"/>
    <property type="molecule type" value="Genomic_DNA"/>
</dbReference>
<dbReference type="RefSeq" id="WP_001120800.1">
    <property type="nucleotide sequence ID" value="NZ_MTFT01000042.1"/>
</dbReference>
<dbReference type="SMR" id="B1IVB6"/>
<dbReference type="KEGG" id="ecl:EcolC_4054"/>
<dbReference type="HOGENOM" id="CLU_016755_0_0_6"/>
<dbReference type="GO" id="GO:0005829">
    <property type="term" value="C:cytosol"/>
    <property type="evidence" value="ECO:0007669"/>
    <property type="project" value="TreeGrafter"/>
</dbReference>
<dbReference type="GO" id="GO:0004148">
    <property type="term" value="F:dihydrolipoyl dehydrogenase (NADH) activity"/>
    <property type="evidence" value="ECO:0007669"/>
    <property type="project" value="TreeGrafter"/>
</dbReference>
<dbReference type="GO" id="GO:0050660">
    <property type="term" value="F:flavin adenine dinucleotide binding"/>
    <property type="evidence" value="ECO:0007669"/>
    <property type="project" value="TreeGrafter"/>
</dbReference>
<dbReference type="GO" id="GO:0003957">
    <property type="term" value="F:NAD(P)+ transhydrogenase (Si-specific) activity"/>
    <property type="evidence" value="ECO:0007669"/>
    <property type="project" value="UniProtKB-UniRule"/>
</dbReference>
<dbReference type="GO" id="GO:0006103">
    <property type="term" value="P:2-oxoglutarate metabolic process"/>
    <property type="evidence" value="ECO:0007669"/>
    <property type="project" value="TreeGrafter"/>
</dbReference>
<dbReference type="GO" id="GO:0006739">
    <property type="term" value="P:NADP metabolic process"/>
    <property type="evidence" value="ECO:0007669"/>
    <property type="project" value="UniProtKB-UniRule"/>
</dbReference>
<dbReference type="FunFam" id="3.30.390.30:FF:000002">
    <property type="entry name" value="Soluble pyridine nucleotide transhydrogenase"/>
    <property type="match status" value="1"/>
</dbReference>
<dbReference type="FunFam" id="3.50.50.60:FF:000008">
    <property type="entry name" value="Soluble pyridine nucleotide transhydrogenase"/>
    <property type="match status" value="1"/>
</dbReference>
<dbReference type="Gene3D" id="3.30.390.30">
    <property type="match status" value="1"/>
</dbReference>
<dbReference type="Gene3D" id="3.50.50.60">
    <property type="entry name" value="FAD/NAD(P)-binding domain"/>
    <property type="match status" value="2"/>
</dbReference>
<dbReference type="HAMAP" id="MF_00247">
    <property type="entry name" value="SthA"/>
    <property type="match status" value="1"/>
</dbReference>
<dbReference type="InterPro" id="IPR050151">
    <property type="entry name" value="Class-I_Pyr_Nuc-Dis_Oxidored"/>
</dbReference>
<dbReference type="InterPro" id="IPR036188">
    <property type="entry name" value="FAD/NAD-bd_sf"/>
</dbReference>
<dbReference type="InterPro" id="IPR023753">
    <property type="entry name" value="FAD/NAD-binding_dom"/>
</dbReference>
<dbReference type="InterPro" id="IPR016156">
    <property type="entry name" value="FAD/NAD-linked_Rdtase_dimer_sf"/>
</dbReference>
<dbReference type="InterPro" id="IPR001100">
    <property type="entry name" value="Pyr_nuc-diS_OxRdtase"/>
</dbReference>
<dbReference type="InterPro" id="IPR004099">
    <property type="entry name" value="Pyr_nucl-diS_OxRdtase_dimer"/>
</dbReference>
<dbReference type="InterPro" id="IPR022962">
    <property type="entry name" value="STH_gammaproteobact"/>
</dbReference>
<dbReference type="NCBIfam" id="NF003585">
    <property type="entry name" value="PRK05249.1"/>
    <property type="match status" value="1"/>
</dbReference>
<dbReference type="PANTHER" id="PTHR22912">
    <property type="entry name" value="DISULFIDE OXIDOREDUCTASE"/>
    <property type="match status" value="1"/>
</dbReference>
<dbReference type="PANTHER" id="PTHR22912:SF93">
    <property type="entry name" value="SOLUBLE PYRIDINE NUCLEOTIDE TRANSHYDROGENASE"/>
    <property type="match status" value="1"/>
</dbReference>
<dbReference type="Pfam" id="PF07992">
    <property type="entry name" value="Pyr_redox_2"/>
    <property type="match status" value="1"/>
</dbReference>
<dbReference type="Pfam" id="PF02852">
    <property type="entry name" value="Pyr_redox_dim"/>
    <property type="match status" value="1"/>
</dbReference>
<dbReference type="PIRSF" id="PIRSF000350">
    <property type="entry name" value="Mercury_reductase_MerA"/>
    <property type="match status" value="1"/>
</dbReference>
<dbReference type="PRINTS" id="PR00368">
    <property type="entry name" value="FADPNR"/>
</dbReference>
<dbReference type="PRINTS" id="PR00411">
    <property type="entry name" value="PNDRDTASEI"/>
</dbReference>
<dbReference type="SUPFAM" id="SSF51905">
    <property type="entry name" value="FAD/NAD(P)-binding domain"/>
    <property type="match status" value="1"/>
</dbReference>
<dbReference type="SUPFAM" id="SSF55424">
    <property type="entry name" value="FAD/NAD-linked reductases, dimerisation (C-terminal) domain"/>
    <property type="match status" value="1"/>
</dbReference>
<keyword id="KW-0963">Cytoplasm</keyword>
<keyword id="KW-0274">FAD</keyword>
<keyword id="KW-0285">Flavoprotein</keyword>
<keyword id="KW-0520">NAD</keyword>
<keyword id="KW-0521">NADP</keyword>
<keyword id="KW-0560">Oxidoreductase</keyword>
<sequence length="466" mass="51574">MPHSYDYDAIVIGSGPGGEGAAMGLVKQGARVAVIERYQNVGGGCTHWGTIPSKALRHAVSRIIEFNQNPLYSDHSRLLRSSFADILNHADNVINQQTRMRQGFYERNHCEILQGNARFVDEHTLALDCPDGSVETLTAEKFIIACGSRPYHPTDVDFTHPRIYDSDSILSMHHEPRHVLIYGAGVIGCEYASIFRGMDVKVDLINTRDRLLAFLDQEMSDSLSYHFWNSGVVIRHNEEYEKIEGCDDGVIMHLKSGKKLKADCLLYANGRTGNTDSLALQNIGLETDSRGQLKVNSMYQTAQPHVYAVGDVIGYPSLASAAYDQGRIAAQALVKGEATAHLIEDIPTGIYTIPEISSVGKTEQQLTAMKVPYEVGRAQFKHLARAQIVGMNVGTLKILFHRETKEILGIHCFGERAAEIIHIGQAIMEQKGGGNTIEYFVNTTFNYPTMAEAYRVAALNGLNRLF</sequence>
<protein>
    <recommendedName>
        <fullName evidence="1">Soluble pyridine nucleotide transhydrogenase</fullName>
        <shortName evidence="1">STH</shortName>
        <ecNumber evidence="1">1.6.1.1</ecNumber>
    </recommendedName>
    <alternativeName>
        <fullName evidence="1">NAD(P)(+) transhydrogenase [B-specific]</fullName>
    </alternativeName>
</protein>